<reference key="1">
    <citation type="journal article" date="2005" name="Nucleic Acids Res.">
        <title>Genome dynamics and diversity of Shigella species, the etiologic agents of bacillary dysentery.</title>
        <authorList>
            <person name="Yang F."/>
            <person name="Yang J."/>
            <person name="Zhang X."/>
            <person name="Chen L."/>
            <person name="Jiang Y."/>
            <person name="Yan Y."/>
            <person name="Tang X."/>
            <person name="Wang J."/>
            <person name="Xiong Z."/>
            <person name="Dong J."/>
            <person name="Xue Y."/>
            <person name="Zhu Y."/>
            <person name="Xu X."/>
            <person name="Sun L."/>
            <person name="Chen S."/>
            <person name="Nie H."/>
            <person name="Peng J."/>
            <person name="Xu J."/>
            <person name="Wang Y."/>
            <person name="Yuan Z."/>
            <person name="Wen Y."/>
            <person name="Yao Z."/>
            <person name="Shen Y."/>
            <person name="Qiang B."/>
            <person name="Hou Y."/>
            <person name="Yu J."/>
            <person name="Jin Q."/>
        </authorList>
    </citation>
    <scope>NUCLEOTIDE SEQUENCE [LARGE SCALE GENOMIC DNA]</scope>
    <source>
        <strain>Ss046</strain>
    </source>
</reference>
<evidence type="ECO:0000255" key="1">
    <source>
        <dbReference type="HAMAP-Rule" id="MF_00598"/>
    </source>
</evidence>
<gene>
    <name evidence="1" type="primary">smg</name>
    <name type="ordered locus">SSON_3425</name>
</gene>
<organism>
    <name type="scientific">Shigella sonnei (strain Ss046)</name>
    <dbReference type="NCBI Taxonomy" id="300269"/>
    <lineage>
        <taxon>Bacteria</taxon>
        <taxon>Pseudomonadati</taxon>
        <taxon>Pseudomonadota</taxon>
        <taxon>Gammaproteobacteria</taxon>
        <taxon>Enterobacterales</taxon>
        <taxon>Enterobacteriaceae</taxon>
        <taxon>Shigella</taxon>
    </lineage>
</organism>
<dbReference type="EMBL" id="CP000038">
    <property type="protein sequence ID" value="AAZ89987.1"/>
    <property type="molecule type" value="Genomic_DNA"/>
</dbReference>
<dbReference type="RefSeq" id="WP_000460680.1">
    <property type="nucleotide sequence ID" value="NC_007384.1"/>
</dbReference>
<dbReference type="SMR" id="Q3YWX5"/>
<dbReference type="GeneID" id="93778703"/>
<dbReference type="KEGG" id="ssn:SSON_3425"/>
<dbReference type="HOGENOM" id="CLU_133242_0_0_6"/>
<dbReference type="Proteomes" id="UP000002529">
    <property type="component" value="Chromosome"/>
</dbReference>
<dbReference type="HAMAP" id="MF_00598">
    <property type="entry name" value="Smg"/>
    <property type="match status" value="1"/>
</dbReference>
<dbReference type="InterPro" id="IPR007456">
    <property type="entry name" value="Smg"/>
</dbReference>
<dbReference type="NCBIfam" id="NF002897">
    <property type="entry name" value="PRK03430.1"/>
    <property type="match status" value="1"/>
</dbReference>
<dbReference type="PANTHER" id="PTHR38692">
    <property type="entry name" value="PROTEIN SMG"/>
    <property type="match status" value="1"/>
</dbReference>
<dbReference type="PANTHER" id="PTHR38692:SF1">
    <property type="entry name" value="PROTEIN SMG"/>
    <property type="match status" value="1"/>
</dbReference>
<dbReference type="Pfam" id="PF04361">
    <property type="entry name" value="DUF494"/>
    <property type="match status" value="1"/>
</dbReference>
<proteinExistence type="inferred from homology"/>
<comment type="similarity">
    <text evidence="1">Belongs to the Smg family.</text>
</comment>
<keyword id="KW-1185">Reference proteome</keyword>
<feature type="chain" id="PRO_1000025676" description="Protein Smg">
    <location>
        <begin position="1"/>
        <end position="157"/>
    </location>
</feature>
<protein>
    <recommendedName>
        <fullName evidence="1">Protein Smg</fullName>
    </recommendedName>
</protein>
<name>SMG_SHISS</name>
<accession>Q3YWX5</accession>
<sequence length="157" mass="18510">MFDVLMYLFETYIHTEAELRVDQDKLEQDLTDAGFEREDIYNALLWLEKLADYQEGLAEPMQLASDPLSMRIYTPEECERLDASCRGFLLFLEQIQVLNLETREMVIERVLALDNAEFELDDLKWVILMVLFNIPGCENAYQQMEELLFEVNEGMLH</sequence>